<dbReference type="EC" id="4.3.2.10" evidence="1"/>
<dbReference type="EMBL" id="CP000931">
    <property type="protein sequence ID" value="ABZ76383.1"/>
    <property type="molecule type" value="Genomic_DNA"/>
</dbReference>
<dbReference type="RefSeq" id="WP_012276915.1">
    <property type="nucleotide sequence ID" value="NC_010334.1"/>
</dbReference>
<dbReference type="SMR" id="B0TQY8"/>
<dbReference type="STRING" id="458817.Shal_1818"/>
<dbReference type="KEGG" id="shl:Shal_1818"/>
<dbReference type="eggNOG" id="COG0107">
    <property type="taxonomic scope" value="Bacteria"/>
</dbReference>
<dbReference type="HOGENOM" id="CLU_048577_4_0_6"/>
<dbReference type="OrthoDB" id="9781903at2"/>
<dbReference type="UniPathway" id="UPA00031">
    <property type="reaction ID" value="UER00010"/>
</dbReference>
<dbReference type="Proteomes" id="UP000001317">
    <property type="component" value="Chromosome"/>
</dbReference>
<dbReference type="GO" id="GO:0005737">
    <property type="term" value="C:cytoplasm"/>
    <property type="evidence" value="ECO:0007669"/>
    <property type="project" value="UniProtKB-SubCell"/>
</dbReference>
<dbReference type="GO" id="GO:0000107">
    <property type="term" value="F:imidazoleglycerol-phosphate synthase activity"/>
    <property type="evidence" value="ECO:0007669"/>
    <property type="project" value="UniProtKB-UniRule"/>
</dbReference>
<dbReference type="GO" id="GO:0016829">
    <property type="term" value="F:lyase activity"/>
    <property type="evidence" value="ECO:0007669"/>
    <property type="project" value="UniProtKB-KW"/>
</dbReference>
<dbReference type="GO" id="GO:0000105">
    <property type="term" value="P:L-histidine biosynthetic process"/>
    <property type="evidence" value="ECO:0007669"/>
    <property type="project" value="UniProtKB-UniRule"/>
</dbReference>
<dbReference type="CDD" id="cd04731">
    <property type="entry name" value="HisF"/>
    <property type="match status" value="1"/>
</dbReference>
<dbReference type="FunFam" id="3.20.20.70:FF:000006">
    <property type="entry name" value="Imidazole glycerol phosphate synthase subunit HisF"/>
    <property type="match status" value="1"/>
</dbReference>
<dbReference type="Gene3D" id="3.20.20.70">
    <property type="entry name" value="Aldolase class I"/>
    <property type="match status" value="1"/>
</dbReference>
<dbReference type="HAMAP" id="MF_01013">
    <property type="entry name" value="HisF"/>
    <property type="match status" value="1"/>
</dbReference>
<dbReference type="InterPro" id="IPR013785">
    <property type="entry name" value="Aldolase_TIM"/>
</dbReference>
<dbReference type="InterPro" id="IPR006062">
    <property type="entry name" value="His_biosynth"/>
</dbReference>
<dbReference type="InterPro" id="IPR004651">
    <property type="entry name" value="HisF"/>
</dbReference>
<dbReference type="InterPro" id="IPR050064">
    <property type="entry name" value="IGPS_HisA/HisF"/>
</dbReference>
<dbReference type="InterPro" id="IPR011060">
    <property type="entry name" value="RibuloseP-bd_barrel"/>
</dbReference>
<dbReference type="NCBIfam" id="TIGR00735">
    <property type="entry name" value="hisF"/>
    <property type="match status" value="1"/>
</dbReference>
<dbReference type="PANTHER" id="PTHR21235:SF2">
    <property type="entry name" value="IMIDAZOLE GLYCEROL PHOSPHATE SYNTHASE HISHF"/>
    <property type="match status" value="1"/>
</dbReference>
<dbReference type="PANTHER" id="PTHR21235">
    <property type="entry name" value="IMIDAZOLE GLYCEROL PHOSPHATE SYNTHASE SUBUNIT HISF/H IGP SYNTHASE SUBUNIT HISF/H"/>
    <property type="match status" value="1"/>
</dbReference>
<dbReference type="Pfam" id="PF00977">
    <property type="entry name" value="His_biosynth"/>
    <property type="match status" value="1"/>
</dbReference>
<dbReference type="SUPFAM" id="SSF51366">
    <property type="entry name" value="Ribulose-phoshate binding barrel"/>
    <property type="match status" value="1"/>
</dbReference>
<protein>
    <recommendedName>
        <fullName evidence="1">Imidazole glycerol phosphate synthase subunit HisF</fullName>
        <ecNumber evidence="1">4.3.2.10</ecNumber>
    </recommendedName>
    <alternativeName>
        <fullName evidence="1">IGP synthase cyclase subunit</fullName>
    </alternativeName>
    <alternativeName>
        <fullName evidence="1">IGP synthase subunit HisF</fullName>
    </alternativeName>
    <alternativeName>
        <fullName evidence="1">ImGP synthase subunit HisF</fullName>
        <shortName evidence="1">IGPS subunit HisF</shortName>
    </alternativeName>
</protein>
<organism>
    <name type="scientific">Shewanella halifaxensis (strain HAW-EB4)</name>
    <dbReference type="NCBI Taxonomy" id="458817"/>
    <lineage>
        <taxon>Bacteria</taxon>
        <taxon>Pseudomonadati</taxon>
        <taxon>Pseudomonadota</taxon>
        <taxon>Gammaproteobacteria</taxon>
        <taxon>Alteromonadales</taxon>
        <taxon>Shewanellaceae</taxon>
        <taxon>Shewanella</taxon>
    </lineage>
</organism>
<comment type="function">
    <text evidence="1">IGPS catalyzes the conversion of PRFAR and glutamine to IGP, AICAR and glutamate. The HisF subunit catalyzes the cyclization activity that produces IGP and AICAR from PRFAR using the ammonia provided by the HisH subunit.</text>
</comment>
<comment type="catalytic activity">
    <reaction evidence="1">
        <text>5-[(5-phospho-1-deoxy-D-ribulos-1-ylimino)methylamino]-1-(5-phospho-beta-D-ribosyl)imidazole-4-carboxamide + L-glutamine = D-erythro-1-(imidazol-4-yl)glycerol 3-phosphate + 5-amino-1-(5-phospho-beta-D-ribosyl)imidazole-4-carboxamide + L-glutamate + H(+)</text>
        <dbReference type="Rhea" id="RHEA:24793"/>
        <dbReference type="ChEBI" id="CHEBI:15378"/>
        <dbReference type="ChEBI" id="CHEBI:29985"/>
        <dbReference type="ChEBI" id="CHEBI:58278"/>
        <dbReference type="ChEBI" id="CHEBI:58359"/>
        <dbReference type="ChEBI" id="CHEBI:58475"/>
        <dbReference type="ChEBI" id="CHEBI:58525"/>
        <dbReference type="EC" id="4.3.2.10"/>
    </reaction>
</comment>
<comment type="pathway">
    <text evidence="1">Amino-acid biosynthesis; L-histidine biosynthesis; L-histidine from 5-phospho-alpha-D-ribose 1-diphosphate: step 5/9.</text>
</comment>
<comment type="subunit">
    <text evidence="1">Heterodimer of HisH and HisF.</text>
</comment>
<comment type="subcellular location">
    <subcellularLocation>
        <location evidence="1">Cytoplasm</location>
    </subcellularLocation>
</comment>
<comment type="similarity">
    <text evidence="1">Belongs to the HisA/HisF family.</text>
</comment>
<keyword id="KW-0028">Amino-acid biosynthesis</keyword>
<keyword id="KW-0963">Cytoplasm</keyword>
<keyword id="KW-0368">Histidine biosynthesis</keyword>
<keyword id="KW-0456">Lyase</keyword>
<gene>
    <name evidence="1" type="primary">hisF</name>
    <name type="ordered locus">Shal_1818</name>
</gene>
<name>HIS6_SHEHH</name>
<proteinExistence type="inferred from homology"/>
<reference key="1">
    <citation type="submission" date="2008-01" db="EMBL/GenBank/DDBJ databases">
        <title>Complete sequence of Shewanella halifaxensis HAW-EB4.</title>
        <authorList>
            <consortium name="US DOE Joint Genome Institute"/>
            <person name="Copeland A."/>
            <person name="Lucas S."/>
            <person name="Lapidus A."/>
            <person name="Glavina del Rio T."/>
            <person name="Dalin E."/>
            <person name="Tice H."/>
            <person name="Bruce D."/>
            <person name="Goodwin L."/>
            <person name="Pitluck S."/>
            <person name="Sims D."/>
            <person name="Brettin T."/>
            <person name="Detter J.C."/>
            <person name="Han C."/>
            <person name="Kuske C.R."/>
            <person name="Schmutz J."/>
            <person name="Larimer F."/>
            <person name="Land M."/>
            <person name="Hauser L."/>
            <person name="Kyrpides N."/>
            <person name="Kim E."/>
            <person name="Zhao J.-S."/>
            <person name="Richardson P."/>
        </authorList>
    </citation>
    <scope>NUCLEOTIDE SEQUENCE [LARGE SCALE GENOMIC DNA]</scope>
    <source>
        <strain>HAW-EB4</strain>
    </source>
</reference>
<evidence type="ECO:0000255" key="1">
    <source>
        <dbReference type="HAMAP-Rule" id="MF_01013"/>
    </source>
</evidence>
<accession>B0TQY8</accession>
<sequence>MLAKRIVPCLDVKEGKVVKGVQFRNHEIVGDIVPLAKRYAEEGADELVFYDITASAHDRVIDKSWISRVAEKIDIPFCVAGGIRTIEQAREKLAFGADKISINSPALTDPSLIARLQDEFGRQCIVIGIDSYYDASSDSYRVKQFTGDEAATKDTQWYTQDWVEEVQKQGCGEIVLNVMNQDGVRQGYDIKQLSMIRSICDVPLIASGGAGTMAHFRDVFSRANVDAALAASVFHKGIIDIQELKQYLKDNQIAVRV</sequence>
<feature type="chain" id="PRO_1000084079" description="Imidazole glycerol phosphate synthase subunit HisF">
    <location>
        <begin position="1"/>
        <end position="257"/>
    </location>
</feature>
<feature type="active site" evidence="1">
    <location>
        <position position="11"/>
    </location>
</feature>
<feature type="active site" evidence="1">
    <location>
        <position position="130"/>
    </location>
</feature>